<name>PSBC_ARAHI</name>
<keyword id="KW-0007">Acetylation</keyword>
<keyword id="KW-0148">Chlorophyll</keyword>
<keyword id="KW-0150">Chloroplast</keyword>
<keyword id="KW-0157">Chromophore</keyword>
<keyword id="KW-0464">Manganese</keyword>
<keyword id="KW-0472">Membrane</keyword>
<keyword id="KW-0479">Metal-binding</keyword>
<keyword id="KW-0597">Phosphoprotein</keyword>
<keyword id="KW-0602">Photosynthesis</keyword>
<keyword id="KW-0604">Photosystem II</keyword>
<keyword id="KW-0934">Plastid</keyword>
<keyword id="KW-0793">Thylakoid</keyword>
<keyword id="KW-0812">Transmembrane</keyword>
<keyword id="KW-1133">Transmembrane helix</keyword>
<accession>A4QK14</accession>
<feature type="propeptide" id="PRO_0000431112" evidence="2">
    <location>
        <begin position="1"/>
        <end position="14"/>
    </location>
</feature>
<feature type="chain" id="PRO_0000361321" description="Photosystem II CP43 reaction center protein" evidence="2">
    <location>
        <begin position="15"/>
        <end position="473"/>
    </location>
</feature>
<feature type="transmembrane region" description="Helical" evidence="2">
    <location>
        <begin position="69"/>
        <end position="93"/>
    </location>
</feature>
<feature type="transmembrane region" description="Helical" evidence="2">
    <location>
        <begin position="134"/>
        <end position="155"/>
    </location>
</feature>
<feature type="transmembrane region" description="Helical" evidence="2">
    <location>
        <begin position="178"/>
        <end position="200"/>
    </location>
</feature>
<feature type="transmembrane region" description="Helical" evidence="2">
    <location>
        <begin position="255"/>
        <end position="275"/>
    </location>
</feature>
<feature type="transmembrane region" description="Helical" evidence="2">
    <location>
        <begin position="291"/>
        <end position="312"/>
    </location>
</feature>
<feature type="transmembrane region" description="Helical" evidence="2">
    <location>
        <begin position="447"/>
        <end position="471"/>
    </location>
</feature>
<feature type="binding site" evidence="2">
    <location>
        <position position="367"/>
    </location>
    <ligand>
        <name>[CaMn4O5] cluster</name>
        <dbReference type="ChEBI" id="CHEBI:189552"/>
    </ligand>
</feature>
<feature type="modified residue" description="N-acetylthreonine" evidence="1 2">
    <location>
        <position position="15"/>
    </location>
</feature>
<feature type="modified residue" description="Phosphothreonine" evidence="1 2">
    <location>
        <position position="15"/>
    </location>
</feature>
<protein>
    <recommendedName>
        <fullName evidence="2">Photosystem II CP43 reaction center protein</fullName>
    </recommendedName>
    <alternativeName>
        <fullName evidence="2">PSII 43 kDa protein</fullName>
    </alternativeName>
    <alternativeName>
        <fullName evidence="2">Protein CP-43</fullName>
    </alternativeName>
</protein>
<geneLocation type="chloroplast"/>
<comment type="function">
    <text evidence="2">One of the components of the core complex of photosystem II (PSII). It binds chlorophyll and helps catalyze the primary light-induced photochemical processes of PSII. PSII is a light-driven water:plastoquinone oxidoreductase, using light energy to abstract electrons from H(2)O, generating O(2) and a proton gradient subsequently used for ATP formation.</text>
</comment>
<comment type="cofactor">
    <text evidence="2">Binds multiple chlorophylls and provides some of the ligands for the Ca-4Mn-5O cluster of the oxygen-evolving complex. It may also provide a ligand for a Cl- that is required for oxygen evolution. PSII binds additional chlorophylls, carotenoids and specific lipids.</text>
</comment>
<comment type="subunit">
    <text evidence="2">PSII is composed of 1 copy each of membrane proteins PsbA, PsbB, PsbC, PsbD, PsbE, PsbF, PsbH, PsbI, PsbJ, PsbK, PsbL, PsbM, PsbT, PsbX, PsbY, PsbZ, Psb30/Ycf12, at least 3 peripheral proteins of the oxygen-evolving complex and a large number of cofactors. It forms dimeric complexes.</text>
</comment>
<comment type="subcellular location">
    <subcellularLocation>
        <location evidence="2">Plastid</location>
        <location evidence="2">Chloroplast thylakoid membrane</location>
        <topology evidence="2">Multi-pass membrane protein</topology>
    </subcellularLocation>
</comment>
<comment type="similarity">
    <text evidence="2">Belongs to the PsbB/PsbC family. PsbC subfamily.</text>
</comment>
<evidence type="ECO:0000250" key="1">
    <source>
        <dbReference type="UniProtKB" id="P56778"/>
    </source>
</evidence>
<evidence type="ECO:0000255" key="2">
    <source>
        <dbReference type="HAMAP-Rule" id="MF_01496"/>
    </source>
</evidence>
<dbReference type="EMBL" id="AP009369">
    <property type="protein sequence ID" value="BAF50019.1"/>
    <property type="molecule type" value="Genomic_DNA"/>
</dbReference>
<dbReference type="RefSeq" id="YP_001123195.1">
    <property type="nucleotide sequence ID" value="NC_009268.1"/>
</dbReference>
<dbReference type="SMR" id="A4QK14"/>
<dbReference type="GeneID" id="4962608"/>
<dbReference type="GO" id="GO:0009535">
    <property type="term" value="C:chloroplast thylakoid membrane"/>
    <property type="evidence" value="ECO:0007669"/>
    <property type="project" value="UniProtKB-SubCell"/>
</dbReference>
<dbReference type="GO" id="GO:0009523">
    <property type="term" value="C:photosystem II"/>
    <property type="evidence" value="ECO:0007669"/>
    <property type="project" value="UniProtKB-KW"/>
</dbReference>
<dbReference type="GO" id="GO:0016168">
    <property type="term" value="F:chlorophyll binding"/>
    <property type="evidence" value="ECO:0007669"/>
    <property type="project" value="UniProtKB-UniRule"/>
</dbReference>
<dbReference type="GO" id="GO:0045156">
    <property type="term" value="F:electron transporter, transferring electrons within the cyclic electron transport pathway of photosynthesis activity"/>
    <property type="evidence" value="ECO:0007669"/>
    <property type="project" value="InterPro"/>
</dbReference>
<dbReference type="GO" id="GO:0046872">
    <property type="term" value="F:metal ion binding"/>
    <property type="evidence" value="ECO:0007669"/>
    <property type="project" value="UniProtKB-KW"/>
</dbReference>
<dbReference type="GO" id="GO:0009772">
    <property type="term" value="P:photosynthetic electron transport in photosystem II"/>
    <property type="evidence" value="ECO:0007669"/>
    <property type="project" value="InterPro"/>
</dbReference>
<dbReference type="FunFam" id="1.10.10.670:FF:000001">
    <property type="entry name" value="Photosystem II CP43 reaction center protein"/>
    <property type="match status" value="1"/>
</dbReference>
<dbReference type="Gene3D" id="1.10.10.670">
    <property type="entry name" value="photosystem ii from thermosynechococcus elongatus"/>
    <property type="match status" value="1"/>
</dbReference>
<dbReference type="HAMAP" id="MF_01496">
    <property type="entry name" value="PSII_PsbC_CP43"/>
    <property type="match status" value="1"/>
</dbReference>
<dbReference type="InterPro" id="IPR000932">
    <property type="entry name" value="PS_antenna-like"/>
</dbReference>
<dbReference type="InterPro" id="IPR036001">
    <property type="entry name" value="PS_II_antenna-like_sf"/>
</dbReference>
<dbReference type="InterPro" id="IPR005869">
    <property type="entry name" value="PSII_PsbC"/>
</dbReference>
<dbReference type="InterPro" id="IPR044900">
    <property type="entry name" value="PSII_PsbC_sf"/>
</dbReference>
<dbReference type="NCBIfam" id="TIGR01153">
    <property type="entry name" value="psbC"/>
    <property type="match status" value="1"/>
</dbReference>
<dbReference type="Pfam" id="PF00421">
    <property type="entry name" value="PSII"/>
    <property type="match status" value="1"/>
</dbReference>
<dbReference type="SUPFAM" id="SSF161077">
    <property type="entry name" value="Photosystem II antenna protein-like"/>
    <property type="match status" value="1"/>
</dbReference>
<reference key="1">
    <citation type="submission" date="2007-03" db="EMBL/GenBank/DDBJ databases">
        <title>Sequencing analysis of Arabis hirsuta chloroplast DNA.</title>
        <authorList>
            <person name="Hosouchi T."/>
            <person name="Tsuruoka H."/>
            <person name="Kotani H."/>
        </authorList>
    </citation>
    <scope>NUCLEOTIDE SEQUENCE [LARGE SCALE GENOMIC DNA]</scope>
</reference>
<proteinExistence type="inferred from homology"/>
<organism>
    <name type="scientific">Arabis hirsuta</name>
    <name type="common">Hairy rock-cress</name>
    <name type="synonym">Turritis hirsuta</name>
    <dbReference type="NCBI Taxonomy" id="78191"/>
    <lineage>
        <taxon>Eukaryota</taxon>
        <taxon>Viridiplantae</taxon>
        <taxon>Streptophyta</taxon>
        <taxon>Embryophyta</taxon>
        <taxon>Tracheophyta</taxon>
        <taxon>Spermatophyta</taxon>
        <taxon>Magnoliopsida</taxon>
        <taxon>eudicotyledons</taxon>
        <taxon>Gunneridae</taxon>
        <taxon>Pentapetalae</taxon>
        <taxon>rosids</taxon>
        <taxon>malvids</taxon>
        <taxon>Brassicales</taxon>
        <taxon>Brassicaceae</taxon>
        <taxon>Arabideae</taxon>
        <taxon>Arabis</taxon>
    </lineage>
</organism>
<gene>
    <name evidence="2" type="primary">psbC</name>
</gene>
<sequence>MKTLYSLRRFYHVETLFNGTLALAGRDQETTGFAWWAGNARLINLSGKLLGAHVAHAGLIVFWAGAMNLFEVAHFVPEKPMYEQGLILLPHLATLGWGVGPGGEVIDTFPYFVSGVLHLISSAVLGFGGIYHALLGPETLEESFPFFGYVWKDRNKMTTILGIHLILLGIGAFLLVFKALYFGGVYDTWAPGGGDVRKITNLTLSPSVIFGYLLKSPFGGEGWIVSVDDLEDIIGGHVWLGSICIFGGIWHILTKPFAWARRALVWSGEAYLSYSLAALSVCGFIACCFVWFNNTAYPSEFYGPTGPEASQAQAFTFLVRDQRLGANVGSAQGPTGLGKYLMRSPTGEVIFGGETMRFWDLRAPWLEPLRGPNGLDLSRLKKDIQPWQERRSAEYMTHAPLGSLNSVGGVATEINAVNYVSPRSWLSTSHFVLGFFLFVGHLWHAGRARAAAAGFEKGIDRDFEPVLSMTPLN</sequence>